<feature type="chain" id="PRO_0000219573" description="Hrp pili protein HrpA">
    <location>
        <begin position="1"/>
        <end position="108"/>
    </location>
</feature>
<feature type="region of interest" description="Disordered" evidence="2">
    <location>
        <begin position="41"/>
        <end position="72"/>
    </location>
</feature>
<feature type="compositionally biased region" description="Polar residues" evidence="2">
    <location>
        <begin position="41"/>
        <end position="56"/>
    </location>
</feature>
<feature type="sequence variant" description="In strain: KZ2W.">
    <original>M</original>
    <variation>I</variation>
    <location>
        <position position="4"/>
    </location>
</feature>
<evidence type="ECO:0000250" key="1"/>
<evidence type="ECO:0000256" key="2">
    <source>
        <dbReference type="SAM" id="MobiDB-lite"/>
    </source>
</evidence>
<evidence type="ECO:0000269" key="3">
    <source>
    </source>
</evidence>
<evidence type="ECO:0000305" key="4"/>
<sequence length="108" mass="11191">MNIMSSLTNAGRGVVNTVGGAAQGINSVKSSADRNIALTKNTGSTDSIDATRSSISKGDAKSAELDGTANEENGLLRETSMLAGFEDKKEALSNQIVASKIRNSVVQF</sequence>
<organism>
    <name type="scientific">Pseudomonas savastanoi pv. phaseolicola</name>
    <name type="common">Pseudomonas syringae pv. phaseolicola</name>
    <dbReference type="NCBI Taxonomy" id="319"/>
    <lineage>
        <taxon>Bacteria</taxon>
        <taxon>Pseudomonadati</taxon>
        <taxon>Pseudomonadota</taxon>
        <taxon>Gammaproteobacteria</taxon>
        <taxon>Pseudomonadales</taxon>
        <taxon>Pseudomonadaceae</taxon>
        <taxon>Pseudomonas</taxon>
    </lineage>
</organism>
<proteinExistence type="evidence at transcript level"/>
<comment type="function">
    <text evidence="1">Major structural protein of the hrp pilus, which is a component of the type III secretion system (T3SS, Hrp secretion system) required for effector protein delivery, parasitism, and pathogenicity. The hrp pilus functions as a conduit for protein delivery into the host cell. Also, affects the expression of T3SS-associated genes. Required for full expression of genes that encode regulatory, secretion, and effector proteins of the T3SS. HrpA-mediated gene regulation apparently is through effect on the mRNA level of hrpR and hrpS (By similarity).</text>
</comment>
<comment type="subcellular location">
    <subcellularLocation>
        <location evidence="3">Secreted</location>
    </subcellularLocation>
    <subcellularLocation>
        <location evidence="3">Fimbrium</location>
    </subcellularLocation>
    <text>Extracellular and secreted via type III secretion system.</text>
</comment>
<comment type="induction">
    <text evidence="3">Expression enhanced by contact with host cell wall. Also regulated by HrpRS and HrpL.</text>
</comment>
<comment type="similarity">
    <text evidence="4">Belongs to the HrpA type 1 family.</text>
</comment>
<gene>
    <name type="primary">hrpA</name>
</gene>
<protein>
    <recommendedName>
        <fullName>Hrp pili protein HrpA</fullName>
    </recommendedName>
    <alternativeName>
        <fullName>T3SS pilin HrpA</fullName>
    </alternativeName>
</protein>
<keyword id="KW-0281">Fimbrium</keyword>
<keyword id="KW-0964">Secreted</keyword>
<keyword id="KW-0843">Virulence</keyword>
<name>HRPA_PSESH</name>
<accession>Q9F0B1</accession>
<accession>Q6L958</accession>
<dbReference type="EMBL" id="AF268940">
    <property type="protein sequence ID" value="AAF99291.1"/>
    <property type="molecule type" value="Genomic_DNA"/>
</dbReference>
<dbReference type="EMBL" id="AB112552">
    <property type="protein sequence ID" value="BAD20819.1"/>
    <property type="molecule type" value="Genomic_DNA"/>
</dbReference>
<dbReference type="EMBL" id="AB112553">
    <property type="protein sequence ID" value="BAD20823.1"/>
    <property type="molecule type" value="Genomic_DNA"/>
</dbReference>
<dbReference type="EMBL" id="AY530203">
    <property type="protein sequence ID" value="AAS20458.1"/>
    <property type="molecule type" value="Genomic_DNA"/>
</dbReference>
<dbReference type="RefSeq" id="WP_011167990.1">
    <property type="nucleotide sequence ID" value="NZ_CP166925.2"/>
</dbReference>
<dbReference type="RefSeq" id="WP_054088654.1">
    <property type="nucleotide sequence ID" value="NZ_JAANQA010000009.1"/>
</dbReference>
<dbReference type="SMR" id="Q9F0B1"/>
<dbReference type="GO" id="GO:0005576">
    <property type="term" value="C:extracellular region"/>
    <property type="evidence" value="ECO:0007669"/>
    <property type="project" value="UniProtKB-SubCell"/>
</dbReference>
<dbReference type="GO" id="GO:0009289">
    <property type="term" value="C:pilus"/>
    <property type="evidence" value="ECO:0007669"/>
    <property type="project" value="UniProtKB-SubCell"/>
</dbReference>
<reference key="1">
    <citation type="journal article" date="2001" name="Proc. Natl. Acad. Sci. U.S.A.">
        <title>HrpZPsph from the plant pathogen Pseudomonas syringae pv. phaseolicola binds to lipid bilayers and forms an ion-conducting pore in vitro.</title>
        <authorList>
            <person name="Lee J."/>
            <person name="Kluesener B."/>
            <person name="Tsiamis G."/>
            <person name="Stevens C."/>
            <person name="Neyt C."/>
            <person name="Tampakaki A.P."/>
            <person name="Panopoulos N.J."/>
            <person name="Noeller J."/>
            <person name="Weiler E.W."/>
            <person name="Cornelis G.R."/>
            <person name="Mansfield J.W."/>
            <person name="Nuernberger T."/>
        </authorList>
    </citation>
    <scope>NUCLEOTIDE SEQUENCE [GENOMIC DNA]</scope>
    <source>
        <strain>1302A / Race 4</strain>
    </source>
</reference>
<reference key="2">
    <citation type="submission" date="2003-06" db="EMBL/GenBank/DDBJ databases">
        <title>Phylogenic analysis of DNA sequences around the hrpZ regions of Pseudomonas syringae.</title>
        <authorList>
            <person name="Inoue Y."/>
            <person name="Takikawa Y."/>
        </authorList>
    </citation>
    <scope>NUCLEOTIDE SEQUENCE [GENOMIC DNA]</scope>
    <source>
        <strain>KZ2W</strain>
        <strain>NPS 3121</strain>
    </source>
</reference>
<reference key="3">
    <citation type="journal article" date="2004" name="Mol. Plant Pathol.">
        <title>The PCR amplification and characterization of entire Pseudomonas syringae hrp/hrc clusters.</title>
        <authorList>
            <person name="Gropp S.J."/>
            <person name="Guttman D.S."/>
        </authorList>
        <dbReference type="AGRICOLA" id="IND43617657"/>
    </citation>
    <scope>NUCLEOTIDE SEQUENCE [GENOMIC DNA]</scope>
    <source>
        <strain>NPS 3121</strain>
    </source>
</reference>
<reference key="4">
    <citation type="journal article" date="2004" name="Mol. Plant Microbe Interact.">
        <title>Transcriptional regulation of components of the type III secretion system and effectors in Pseudomonas syringae pv. phaseolicola.</title>
        <authorList>
            <person name="Thwaites R."/>
            <person name="Spanu P.D."/>
            <person name="Panopoulos N.J."/>
            <person name="Stevens C."/>
            <person name="Mansfield J.W."/>
        </authorList>
    </citation>
    <scope>TRANSCRIPTIONAL REGULATION</scope>
    <scope>SUBCELLULAR LOCATION</scope>
    <source>
        <strain>1449B / Race 7</strain>
        <strain>1488A / Race 6</strain>
    </source>
</reference>